<name>PSBB_ORYSI</name>
<reference key="1">
    <citation type="journal article" date="2004" name="Plant Physiol.">
        <title>A comparison of rice chloroplast genomes.</title>
        <authorList>
            <person name="Tang J."/>
            <person name="Xia H."/>
            <person name="Cao M."/>
            <person name="Zhang X."/>
            <person name="Zeng W."/>
            <person name="Hu S."/>
            <person name="Tong W."/>
            <person name="Wang J."/>
            <person name="Wang J."/>
            <person name="Yu J."/>
            <person name="Yang H."/>
            <person name="Zhu L."/>
        </authorList>
    </citation>
    <scope>NUCLEOTIDE SEQUENCE [LARGE SCALE GENOMIC DNA]</scope>
    <scope>POLYMORPHISM</scope>
    <source>
        <strain>cv. 93-11</strain>
    </source>
</reference>
<dbReference type="EMBL" id="AY522329">
    <property type="protein sequence ID" value="AAS46071.1"/>
    <property type="molecule type" value="Genomic_DNA"/>
</dbReference>
<dbReference type="RefSeq" id="YP_654231.1">
    <property type="nucleotide sequence ID" value="NC_008155.1"/>
</dbReference>
<dbReference type="SMR" id="P0C363"/>
<dbReference type="STRING" id="39946.P0C363"/>
<dbReference type="EnsemblPlants" id="OsLiXu_Ung0021330.01">
    <property type="protein sequence ID" value="OsLiXu_Ung0021330.01"/>
    <property type="gene ID" value="OsLiXu_Ung0021330"/>
</dbReference>
<dbReference type="GeneID" id="4126894"/>
<dbReference type="Gramene" id="OsLiXu_Ung0021330.01">
    <property type="protein sequence ID" value="OsLiXu_Ung0021330.01"/>
    <property type="gene ID" value="OsLiXu_Ung0021330"/>
</dbReference>
<dbReference type="Proteomes" id="UP000007015">
    <property type="component" value="Chloroplast"/>
</dbReference>
<dbReference type="GO" id="GO:0009535">
    <property type="term" value="C:chloroplast thylakoid membrane"/>
    <property type="evidence" value="ECO:0007669"/>
    <property type="project" value="UniProtKB-SubCell"/>
</dbReference>
<dbReference type="GO" id="GO:0009523">
    <property type="term" value="C:photosystem II"/>
    <property type="evidence" value="ECO:0007669"/>
    <property type="project" value="UniProtKB-KW"/>
</dbReference>
<dbReference type="GO" id="GO:0009536">
    <property type="term" value="C:plastid"/>
    <property type="evidence" value="ECO:0000305"/>
    <property type="project" value="Gramene"/>
</dbReference>
<dbReference type="GO" id="GO:0016168">
    <property type="term" value="F:chlorophyll binding"/>
    <property type="evidence" value="ECO:0007669"/>
    <property type="project" value="UniProtKB-UniRule"/>
</dbReference>
<dbReference type="GO" id="GO:0045156">
    <property type="term" value="F:electron transporter, transferring electrons within the cyclic electron transport pathway of photosynthesis activity"/>
    <property type="evidence" value="ECO:0007669"/>
    <property type="project" value="InterPro"/>
</dbReference>
<dbReference type="GO" id="GO:0009772">
    <property type="term" value="P:photosynthetic electron transport in photosystem II"/>
    <property type="evidence" value="ECO:0007669"/>
    <property type="project" value="InterPro"/>
</dbReference>
<dbReference type="FunFam" id="3.10.680.10:FF:000001">
    <property type="entry name" value="Photosystem II CP47 reaction center protein"/>
    <property type="match status" value="1"/>
</dbReference>
<dbReference type="Gene3D" id="3.10.680.10">
    <property type="entry name" value="Photosystem II CP47 reaction center protein"/>
    <property type="match status" value="1"/>
</dbReference>
<dbReference type="HAMAP" id="MF_01495">
    <property type="entry name" value="PSII_PsbB_CP47"/>
    <property type="match status" value="1"/>
</dbReference>
<dbReference type="InterPro" id="IPR000932">
    <property type="entry name" value="PS_antenna-like"/>
</dbReference>
<dbReference type="InterPro" id="IPR036001">
    <property type="entry name" value="PS_II_antenna-like_sf"/>
</dbReference>
<dbReference type="InterPro" id="IPR017486">
    <property type="entry name" value="PSII_PsbB"/>
</dbReference>
<dbReference type="NCBIfam" id="TIGR03039">
    <property type="entry name" value="PS_II_CP47"/>
    <property type="match status" value="1"/>
</dbReference>
<dbReference type="PANTHER" id="PTHR33180">
    <property type="entry name" value="PHOTOSYSTEM II CP43 REACTION CENTER PROTEIN"/>
    <property type="match status" value="1"/>
</dbReference>
<dbReference type="PANTHER" id="PTHR33180:SF37">
    <property type="entry name" value="PHOTOSYSTEM II CP43 REACTION CENTER PROTEIN"/>
    <property type="match status" value="1"/>
</dbReference>
<dbReference type="Pfam" id="PF00421">
    <property type="entry name" value="PSII"/>
    <property type="match status" value="1"/>
</dbReference>
<dbReference type="SUPFAM" id="SSF161077">
    <property type="entry name" value="Photosystem II antenna protein-like"/>
    <property type="match status" value="1"/>
</dbReference>
<geneLocation type="chloroplast"/>
<evidence type="ECO:0000255" key="1">
    <source>
        <dbReference type="HAMAP-Rule" id="MF_01495"/>
    </source>
</evidence>
<feature type="chain" id="PRO_0000288992" description="Photosystem II CP47 reaction center protein">
    <location>
        <begin position="1"/>
        <end position="508"/>
    </location>
</feature>
<feature type="transmembrane region" description="Helical" evidence="1">
    <location>
        <begin position="21"/>
        <end position="36"/>
    </location>
</feature>
<feature type="transmembrane region" description="Helical" evidence="1">
    <location>
        <begin position="101"/>
        <end position="115"/>
    </location>
</feature>
<feature type="transmembrane region" description="Helical" evidence="1">
    <location>
        <begin position="140"/>
        <end position="156"/>
    </location>
</feature>
<feature type="transmembrane region" description="Helical" evidence="1">
    <location>
        <begin position="203"/>
        <end position="218"/>
    </location>
</feature>
<feature type="transmembrane region" description="Helical" evidence="1">
    <location>
        <begin position="237"/>
        <end position="252"/>
    </location>
</feature>
<feature type="transmembrane region" description="Helical" evidence="1">
    <location>
        <begin position="457"/>
        <end position="472"/>
    </location>
</feature>
<accession>P0C363</accession>
<accession>P12157</accession>
<accession>Q6QXT1</accession>
<accession>Q6QY58</accession>
<protein>
    <recommendedName>
        <fullName evidence="1">Photosystem II CP47 reaction center protein</fullName>
    </recommendedName>
    <alternativeName>
        <fullName evidence="1">PSII 47 kDa protein</fullName>
    </alternativeName>
    <alternativeName>
        <fullName evidence="1">Protein CP-47</fullName>
    </alternativeName>
</protein>
<sequence length="508" mass="56218">MGLPWYRVHTVVLNDPGRLLSVHIMHTALVSGWAGSMALYELAVFDPSDPVLDPMWRQGMFVIPFMTRLGITNSWGGWSISGGTVTNPGIWSYEGVAGAHIVFSGLCFLAAIWHWVYWDLEIFCDERTGKPSLDLPKIFGIHLFLAGVACFGFGAFHVTGLYGPGIWVSDPYGLTGKVQAVNPVWGAEGFDPFVPGGIASHHIAAGTLGILAGLFHLSVRPPQRLYKGLRMGNIETVLSSSIAAVFFAAFVVAGTMWYGSATTPIELFGPTRYQWDQGYFQQEIYRRVSDGLAENLSLSEAWSKIPEKLAFYDYIGNNPAKGGLFRAGSMDNGDGIAVGWLGHPIFRDKEGRELFVRRMPTFFETFPVVLVDEEGIVRADVPFRRAESKYSVEQVGVTVEFYGGELNGVSYSDPATVKKYARRSQLGEIFELDRATLKSDGVFRSSPRGWFTFGHATFALLFFFGHIWHGARTLFRDVFAGIDPDLDAQVEFGTFQKVGDPTTRRQPV</sequence>
<comment type="function">
    <text evidence="1">One of the components of the core complex of photosystem II (PSII). It binds chlorophyll and helps catalyze the primary light-induced photochemical processes of PSII. PSII is a light-driven water:plastoquinone oxidoreductase, using light energy to abstract electrons from H(2)O, generating O(2) and a proton gradient subsequently used for ATP formation.</text>
</comment>
<comment type="cofactor">
    <text evidence="1">Binds multiple chlorophylls. PSII binds additional chlorophylls, carotenoids and specific lipids.</text>
</comment>
<comment type="subunit">
    <text evidence="1">PSII is composed of 1 copy each of membrane proteins PsbA, PsbB, PsbC, PsbD, PsbE, PsbF, PsbH, PsbI, PsbJ, PsbK, PsbL, PsbM, PsbT, PsbX, PsbY, PsbZ, Psb30/Ycf12, at least 3 peripheral proteins of the oxygen-evolving complex and a large number of cofactors. It forms dimeric complexes.</text>
</comment>
<comment type="subcellular location">
    <subcellularLocation>
        <location evidence="1">Plastid</location>
        <location evidence="1">Chloroplast thylakoid membrane</location>
        <topology evidence="1">Multi-pass membrane protein</topology>
    </subcellularLocation>
</comment>
<comment type="similarity">
    <text evidence="1">Belongs to the PsbB/PsbC family. PsbB subfamily.</text>
</comment>
<gene>
    <name evidence="1" type="primary">psbB</name>
    <name type="ORF">9311089</name>
</gene>
<proteinExistence type="inferred from homology"/>
<keyword id="KW-0148">Chlorophyll</keyword>
<keyword id="KW-0150">Chloroplast</keyword>
<keyword id="KW-0157">Chromophore</keyword>
<keyword id="KW-0472">Membrane</keyword>
<keyword id="KW-0602">Photosynthesis</keyword>
<keyword id="KW-0604">Photosystem II</keyword>
<keyword id="KW-0934">Plastid</keyword>
<keyword id="KW-1185">Reference proteome</keyword>
<keyword id="KW-0793">Thylakoid</keyword>
<keyword id="KW-0812">Transmembrane</keyword>
<keyword id="KW-1133">Transmembrane helix</keyword>
<organism>
    <name type="scientific">Oryza sativa subsp. indica</name>
    <name type="common">Rice</name>
    <dbReference type="NCBI Taxonomy" id="39946"/>
    <lineage>
        <taxon>Eukaryota</taxon>
        <taxon>Viridiplantae</taxon>
        <taxon>Streptophyta</taxon>
        <taxon>Embryophyta</taxon>
        <taxon>Tracheophyta</taxon>
        <taxon>Spermatophyta</taxon>
        <taxon>Magnoliopsida</taxon>
        <taxon>Liliopsida</taxon>
        <taxon>Poales</taxon>
        <taxon>Poaceae</taxon>
        <taxon>BOP clade</taxon>
        <taxon>Oryzoideae</taxon>
        <taxon>Oryzeae</taxon>
        <taxon>Oryzinae</taxon>
        <taxon>Oryza</taxon>
        <taxon>Oryza sativa</taxon>
    </lineage>
</organism>